<comment type="function">
    <text evidence="1">Transfers 2-(5''-triphosphoribosyl)-3'-dephosphocoenzyme-A on a serine residue to the apo-acyl carrier protein (gamma chain) of the citrate lyase to yield holo-acyl carrier protein.</text>
</comment>
<comment type="catalytic activity">
    <reaction evidence="1">
        <text>apo-[citrate lyase ACP] + 2'-(5''-triphospho-alpha-D-ribosyl)-3'-dephospho-CoA = holo-[citrate lyase ACP] + diphosphate</text>
        <dbReference type="Rhea" id="RHEA:16333"/>
        <dbReference type="Rhea" id="RHEA-COMP:10157"/>
        <dbReference type="Rhea" id="RHEA-COMP:10158"/>
        <dbReference type="ChEBI" id="CHEBI:29999"/>
        <dbReference type="ChEBI" id="CHEBI:33019"/>
        <dbReference type="ChEBI" id="CHEBI:61378"/>
        <dbReference type="ChEBI" id="CHEBI:82683"/>
        <dbReference type="EC" id="2.7.7.61"/>
    </reaction>
</comment>
<comment type="similarity">
    <text evidence="1">Belongs to the CitX family.</text>
</comment>
<feature type="chain" id="PRO_0000214691" description="Probable apo-citrate lyase phosphoribosyl-dephospho-CoA transferase">
    <location>
        <begin position="1"/>
        <end position="192"/>
    </location>
</feature>
<dbReference type="EC" id="2.7.7.61" evidence="1"/>
<dbReference type="EMBL" id="AE009949">
    <property type="protein sequence ID" value="AAL97761.1"/>
    <property type="molecule type" value="Genomic_DNA"/>
</dbReference>
<dbReference type="RefSeq" id="WP_011017787.1">
    <property type="nucleotide sequence ID" value="NC_003485.1"/>
</dbReference>
<dbReference type="SMR" id="Q8P0Z2"/>
<dbReference type="KEGG" id="spm:spyM18_1141"/>
<dbReference type="HOGENOM" id="CLU_104529_1_0_9"/>
<dbReference type="GO" id="GO:0050519">
    <property type="term" value="F:holo-citrate lyase synthase activity"/>
    <property type="evidence" value="ECO:0007669"/>
    <property type="project" value="UniProtKB-UniRule"/>
</dbReference>
<dbReference type="GO" id="GO:0051191">
    <property type="term" value="P:prosthetic group biosynthetic process"/>
    <property type="evidence" value="ECO:0007669"/>
    <property type="project" value="InterPro"/>
</dbReference>
<dbReference type="HAMAP" id="MF_00398">
    <property type="entry name" value="CitX"/>
    <property type="match status" value="1"/>
</dbReference>
<dbReference type="InterPro" id="IPR005551">
    <property type="entry name" value="CitX"/>
</dbReference>
<dbReference type="NCBIfam" id="TIGR03124">
    <property type="entry name" value="citrate_citX"/>
    <property type="match status" value="1"/>
</dbReference>
<dbReference type="NCBIfam" id="NF002383">
    <property type="entry name" value="PRK01392.1"/>
    <property type="match status" value="1"/>
</dbReference>
<dbReference type="Pfam" id="PF03802">
    <property type="entry name" value="CitX"/>
    <property type="match status" value="1"/>
</dbReference>
<evidence type="ECO:0000255" key="1">
    <source>
        <dbReference type="HAMAP-Rule" id="MF_00398"/>
    </source>
</evidence>
<keyword id="KW-0548">Nucleotidyltransferase</keyword>
<keyword id="KW-0808">Transferase</keyword>
<organism>
    <name type="scientific">Streptococcus pyogenes serotype M18 (strain MGAS8232)</name>
    <dbReference type="NCBI Taxonomy" id="186103"/>
    <lineage>
        <taxon>Bacteria</taxon>
        <taxon>Bacillati</taxon>
        <taxon>Bacillota</taxon>
        <taxon>Bacilli</taxon>
        <taxon>Lactobacillales</taxon>
        <taxon>Streptococcaceae</taxon>
        <taxon>Streptococcus</taxon>
    </lineage>
</organism>
<gene>
    <name evidence="1" type="primary">citX</name>
    <name type="ordered locus">spyM18_1141</name>
</gene>
<proteinExistence type="inferred from homology"/>
<accession>Q8P0Z2</accession>
<sequence length="192" mass="21506">MCKDTYFSGEAIQLSDMLRAREERALRQLHLLKEYPEGSLLSVTMNIPGPIKTSPKLLEAFDIVIKAIQTALADDKICYQLRLLPTTGYEYYLITSLPSQDLKLKMIALETDLPIGRLMDLDVLVLSNGRPSPISRTTLGAPPRQCFICSKEAKVCGRLRKHSVEEMQTAISKLLHSFFNKDNQSSSSDKTG</sequence>
<reference key="1">
    <citation type="journal article" date="2002" name="Proc. Natl. Acad. Sci. U.S.A.">
        <title>Genome sequence and comparative microarray analysis of serotype M18 group A Streptococcus strains associated with acute rheumatic fever outbreaks.</title>
        <authorList>
            <person name="Smoot J.C."/>
            <person name="Barbian K.D."/>
            <person name="Van Gompel J.J."/>
            <person name="Smoot L.M."/>
            <person name="Chaussee M.S."/>
            <person name="Sylva G.L."/>
            <person name="Sturdevant D.E."/>
            <person name="Ricklefs S.M."/>
            <person name="Porcella S.F."/>
            <person name="Parkins L.D."/>
            <person name="Beres S.B."/>
            <person name="Campbell D.S."/>
            <person name="Smith T.M."/>
            <person name="Zhang Q."/>
            <person name="Kapur V."/>
            <person name="Daly J.A."/>
            <person name="Veasy L.G."/>
            <person name="Musser J.M."/>
        </authorList>
    </citation>
    <scope>NUCLEOTIDE SEQUENCE [LARGE SCALE GENOMIC DNA]</scope>
    <source>
        <strain>MGAS8232</strain>
    </source>
</reference>
<protein>
    <recommendedName>
        <fullName evidence="1">Probable apo-citrate lyase phosphoribosyl-dephospho-CoA transferase</fullName>
        <ecNumber evidence="1">2.7.7.61</ecNumber>
    </recommendedName>
    <alternativeName>
        <fullName evidence="1">Apo-ACP nucleodityltransferase</fullName>
    </alternativeName>
    <alternativeName>
        <fullName evidence="1">Holo-ACP synthase</fullName>
    </alternativeName>
    <alternativeName>
        <fullName evidence="1">Holo-citrate lyase synthase</fullName>
    </alternativeName>
</protein>
<name>CITX_STRP8</name>